<reference key="1">
    <citation type="journal article" date="2005" name="PLoS Biol.">
        <title>The genome sequence of Rickettsia felis identifies the first putative conjugative plasmid in an obligate intracellular parasite.</title>
        <authorList>
            <person name="Ogata H."/>
            <person name="Renesto P."/>
            <person name="Audic S."/>
            <person name="Robert C."/>
            <person name="Blanc G."/>
            <person name="Fournier P.-E."/>
            <person name="Parinello H."/>
            <person name="Claverie J.-M."/>
            <person name="Raoult D."/>
        </authorList>
    </citation>
    <scope>NUCLEOTIDE SEQUENCE [LARGE SCALE GENOMIC DNA]</scope>
    <source>
        <strain>ATCC VR-1525 / URRWXCal2</strain>
    </source>
</reference>
<keyword id="KW-0963">Cytoplasm</keyword>
<keyword id="KW-0350">Heme biosynthesis</keyword>
<keyword id="KW-0408">Iron</keyword>
<keyword id="KW-0456">Lyase</keyword>
<keyword id="KW-0479">Metal-binding</keyword>
<keyword id="KW-0627">Porphyrin biosynthesis</keyword>
<dbReference type="EC" id="4.98.1.1" evidence="1"/>
<dbReference type="EMBL" id="CP000053">
    <property type="protein sequence ID" value="AAY62250.1"/>
    <property type="status" value="ALT_INIT"/>
    <property type="molecule type" value="Genomic_DNA"/>
</dbReference>
<dbReference type="SMR" id="Q4UJN9"/>
<dbReference type="STRING" id="315456.RF_1399"/>
<dbReference type="KEGG" id="rfe:RF_1399"/>
<dbReference type="eggNOG" id="COG0276">
    <property type="taxonomic scope" value="Bacteria"/>
</dbReference>
<dbReference type="HOGENOM" id="CLU_018884_4_1_5"/>
<dbReference type="UniPathway" id="UPA00252">
    <property type="reaction ID" value="UER00325"/>
</dbReference>
<dbReference type="Proteomes" id="UP000008548">
    <property type="component" value="Chromosome"/>
</dbReference>
<dbReference type="GO" id="GO:0005737">
    <property type="term" value="C:cytoplasm"/>
    <property type="evidence" value="ECO:0007669"/>
    <property type="project" value="UniProtKB-SubCell"/>
</dbReference>
<dbReference type="GO" id="GO:0004325">
    <property type="term" value="F:ferrochelatase activity"/>
    <property type="evidence" value="ECO:0007669"/>
    <property type="project" value="UniProtKB-UniRule"/>
</dbReference>
<dbReference type="GO" id="GO:0046872">
    <property type="term" value="F:metal ion binding"/>
    <property type="evidence" value="ECO:0007669"/>
    <property type="project" value="UniProtKB-KW"/>
</dbReference>
<dbReference type="GO" id="GO:0006783">
    <property type="term" value="P:heme biosynthetic process"/>
    <property type="evidence" value="ECO:0007669"/>
    <property type="project" value="UniProtKB-UniRule"/>
</dbReference>
<dbReference type="CDD" id="cd00419">
    <property type="entry name" value="Ferrochelatase_C"/>
    <property type="match status" value="1"/>
</dbReference>
<dbReference type="CDD" id="cd03411">
    <property type="entry name" value="Ferrochelatase_N"/>
    <property type="match status" value="1"/>
</dbReference>
<dbReference type="Gene3D" id="3.40.50.1400">
    <property type="match status" value="2"/>
</dbReference>
<dbReference type="HAMAP" id="MF_00323">
    <property type="entry name" value="Ferrochelatase"/>
    <property type="match status" value="1"/>
</dbReference>
<dbReference type="InterPro" id="IPR001015">
    <property type="entry name" value="Ferrochelatase"/>
</dbReference>
<dbReference type="InterPro" id="IPR019772">
    <property type="entry name" value="Ferrochelatase_AS"/>
</dbReference>
<dbReference type="InterPro" id="IPR033644">
    <property type="entry name" value="Ferrochelatase_C"/>
</dbReference>
<dbReference type="InterPro" id="IPR033659">
    <property type="entry name" value="Ferrochelatase_N"/>
</dbReference>
<dbReference type="NCBIfam" id="TIGR00109">
    <property type="entry name" value="hemH"/>
    <property type="match status" value="1"/>
</dbReference>
<dbReference type="PANTHER" id="PTHR11108">
    <property type="entry name" value="FERROCHELATASE"/>
    <property type="match status" value="1"/>
</dbReference>
<dbReference type="PANTHER" id="PTHR11108:SF1">
    <property type="entry name" value="FERROCHELATASE, MITOCHONDRIAL"/>
    <property type="match status" value="1"/>
</dbReference>
<dbReference type="Pfam" id="PF00762">
    <property type="entry name" value="Ferrochelatase"/>
    <property type="match status" value="1"/>
</dbReference>
<dbReference type="SUPFAM" id="SSF53800">
    <property type="entry name" value="Chelatase"/>
    <property type="match status" value="1"/>
</dbReference>
<dbReference type="PROSITE" id="PS00534">
    <property type="entry name" value="FERROCHELATASE"/>
    <property type="match status" value="1"/>
</dbReference>
<feature type="chain" id="PRO_0000277997" description="Ferrochelatase">
    <location>
        <begin position="1"/>
        <end position="344"/>
    </location>
</feature>
<feature type="binding site" evidence="1">
    <location>
        <position position="190"/>
    </location>
    <ligand>
        <name>Fe cation</name>
        <dbReference type="ChEBI" id="CHEBI:24875"/>
    </ligand>
</feature>
<feature type="binding site" evidence="1">
    <location>
        <position position="270"/>
    </location>
    <ligand>
        <name>Fe cation</name>
        <dbReference type="ChEBI" id="CHEBI:24875"/>
    </ligand>
</feature>
<organism>
    <name type="scientific">Rickettsia felis (strain ATCC VR-1525 / URRWXCal2)</name>
    <name type="common">Rickettsia azadi</name>
    <dbReference type="NCBI Taxonomy" id="315456"/>
    <lineage>
        <taxon>Bacteria</taxon>
        <taxon>Pseudomonadati</taxon>
        <taxon>Pseudomonadota</taxon>
        <taxon>Alphaproteobacteria</taxon>
        <taxon>Rickettsiales</taxon>
        <taxon>Rickettsiaceae</taxon>
        <taxon>Rickettsieae</taxon>
        <taxon>Rickettsia</taxon>
        <taxon>spotted fever group</taxon>
    </lineage>
</organism>
<comment type="function">
    <text evidence="1">Catalyzes the ferrous insertion into protoporphyrin IX.</text>
</comment>
<comment type="catalytic activity">
    <reaction evidence="1">
        <text>heme b + 2 H(+) = protoporphyrin IX + Fe(2+)</text>
        <dbReference type="Rhea" id="RHEA:22584"/>
        <dbReference type="ChEBI" id="CHEBI:15378"/>
        <dbReference type="ChEBI" id="CHEBI:29033"/>
        <dbReference type="ChEBI" id="CHEBI:57306"/>
        <dbReference type="ChEBI" id="CHEBI:60344"/>
        <dbReference type="EC" id="4.98.1.1"/>
    </reaction>
</comment>
<comment type="pathway">
    <text evidence="1">Porphyrin-containing compound metabolism; protoheme biosynthesis; protoheme from protoporphyrin-IX: step 1/1.</text>
</comment>
<comment type="subcellular location">
    <subcellularLocation>
        <location evidence="1">Cytoplasm</location>
    </subcellularLocation>
</comment>
<comment type="similarity">
    <text evidence="1">Belongs to the ferrochelatase family.</text>
</comment>
<comment type="sequence caution" evidence="2">
    <conflict type="erroneous initiation">
        <sequence resource="EMBL-CDS" id="AAY62250"/>
    </conflict>
</comment>
<name>HEMH_RICFE</name>
<protein>
    <recommendedName>
        <fullName evidence="1">Ferrochelatase</fullName>
        <ecNumber evidence="1">4.98.1.1</ecNumber>
    </recommendedName>
    <alternativeName>
        <fullName evidence="1">Heme synthase</fullName>
    </alternativeName>
    <alternativeName>
        <fullName evidence="1">Protoheme ferro-lyase</fullName>
    </alternativeName>
</protein>
<accession>Q4UJN9</accession>
<evidence type="ECO:0000255" key="1">
    <source>
        <dbReference type="HAMAP-Rule" id="MF_00323"/>
    </source>
</evidence>
<evidence type="ECO:0000305" key="2"/>
<sequence>MKKRIAIVLFNLGGPKNLESVKPFLFNLFYDKAIINLPNPFRYIIAKIISTTRERKSQKIYSLIGGKSSLLQETEEQKLALTEKLKQLIKEDFAIFINMRYSAPFAKEVIDQIKKYNPSEIILLPLYPQFSSTTTGSSVKNFLQNFDIDISIKTICCYPQEEDFIKSHVSLIKEKLYDDDKNFRILFSAHGLPEKIIKAGDPYSFQIKETVKAIVKELNIKDLDYKITYQSRVGPIEWLKPNTEDEIELAGKLKKDIIIVPISFVSEHVETLVELDIEYKLIADKYEVQYTRIPTLGTNKIFINSLTNILLQFINKVDTNLVTSSSSTRICPNEFTKCLCKLTN</sequence>
<proteinExistence type="inferred from homology"/>
<gene>
    <name evidence="1" type="primary">hemH</name>
    <name type="ordered locus">RF_1399</name>
</gene>